<dbReference type="EMBL" id="BC075521">
    <property type="protein sequence ID" value="AAH75521.1"/>
    <property type="molecule type" value="mRNA"/>
</dbReference>
<dbReference type="RefSeq" id="NP_001004978.1">
    <property type="nucleotide sequence ID" value="NM_001004978.1"/>
</dbReference>
<dbReference type="FunCoup" id="Q6DIL6">
    <property type="interactions" value="34"/>
</dbReference>
<dbReference type="STRING" id="8364.ENSXETP00000037189"/>
<dbReference type="PaxDb" id="8364-ENSXETP00000001210"/>
<dbReference type="DNASU" id="448424"/>
<dbReference type="GeneID" id="448424"/>
<dbReference type="KEGG" id="xtr:448424"/>
<dbReference type="AGR" id="Xenbase:XB-GENE-5763874"/>
<dbReference type="CTD" id="220108"/>
<dbReference type="Xenbase" id="XB-GENE-5763874">
    <property type="gene designation" value="fam124a"/>
</dbReference>
<dbReference type="eggNOG" id="ENOG502QUA8">
    <property type="taxonomic scope" value="Eukaryota"/>
</dbReference>
<dbReference type="InParanoid" id="Q6DIL6"/>
<dbReference type="OrthoDB" id="10023686at2759"/>
<dbReference type="Proteomes" id="UP000008143">
    <property type="component" value="Chromosome 2"/>
</dbReference>
<dbReference type="Bgee" id="ENSXETG00000027168">
    <property type="expression patterns" value="Expressed in ovary and 9 other cell types or tissues"/>
</dbReference>
<dbReference type="InterPro" id="IPR029380">
    <property type="entry name" value="FAM124"/>
</dbReference>
<dbReference type="InterPro" id="IPR046365">
    <property type="entry name" value="FAM124_dom"/>
</dbReference>
<dbReference type="PANTHER" id="PTHR14715">
    <property type="entry name" value="FAM124 DOMAIN-CONTAINING PROTEIN-RELATED"/>
    <property type="match status" value="1"/>
</dbReference>
<dbReference type="PANTHER" id="PTHR14715:SF4">
    <property type="entry name" value="PROTEIN FAM124A"/>
    <property type="match status" value="1"/>
</dbReference>
<dbReference type="Pfam" id="PF15067">
    <property type="entry name" value="FAM124"/>
    <property type="match status" value="1"/>
</dbReference>
<name>F124A_XENTR</name>
<proteinExistence type="evidence at transcript level"/>
<keyword id="KW-1185">Reference proteome</keyword>
<comment type="similarity">
    <text evidence="2">Belongs to the FAM124 family.</text>
</comment>
<reference key="1">
    <citation type="submission" date="2004-06" db="EMBL/GenBank/DDBJ databases">
        <authorList>
            <consortium name="NIH - Xenopus Gene Collection (XGC) project"/>
        </authorList>
    </citation>
    <scope>NUCLEOTIDE SEQUENCE [LARGE SCALE MRNA]</scope>
    <source>
        <tissue>Gastrula</tissue>
    </source>
</reference>
<organism>
    <name type="scientific">Xenopus tropicalis</name>
    <name type="common">Western clawed frog</name>
    <name type="synonym">Silurana tropicalis</name>
    <dbReference type="NCBI Taxonomy" id="8364"/>
    <lineage>
        <taxon>Eukaryota</taxon>
        <taxon>Metazoa</taxon>
        <taxon>Chordata</taxon>
        <taxon>Craniata</taxon>
        <taxon>Vertebrata</taxon>
        <taxon>Euteleostomi</taxon>
        <taxon>Amphibia</taxon>
        <taxon>Batrachia</taxon>
        <taxon>Anura</taxon>
        <taxon>Pipoidea</taxon>
        <taxon>Pipidae</taxon>
        <taxon>Xenopodinae</taxon>
        <taxon>Xenopus</taxon>
        <taxon>Silurana</taxon>
    </lineage>
</organism>
<accession>Q6DIL6</accession>
<feature type="chain" id="PRO_0000286383" description="Protein FAM124A">
    <location>
        <begin position="1"/>
        <end position="503"/>
    </location>
</feature>
<feature type="region of interest" description="Disordered" evidence="1">
    <location>
        <begin position="434"/>
        <end position="470"/>
    </location>
</feature>
<feature type="compositionally biased region" description="Polar residues" evidence="1">
    <location>
        <begin position="436"/>
        <end position="445"/>
    </location>
</feature>
<feature type="compositionally biased region" description="Low complexity" evidence="1">
    <location>
        <begin position="447"/>
        <end position="460"/>
    </location>
</feature>
<sequence length="503" mass="57277">MIGRTREQKQGGELSVEDIQDPFLVSIHIIADPGESKCLQEAIDRLLVWIHPDLQLFCVSERRVLKKKKPSKSFASHPALAIILFLQEDYGEEQILHLHKCFQKPPWQFHHTERVHGKFLPYMPCNQDFFTLANGTPLWAIRQVHYGKEIIRFTIYCSYENFADMMKMYELIIKKRVWRKKTDFCVFPVYSNMDFDIEFSLKRLVKGQKPVPLESSLLEFRVRDFGQLIPLLPNQCSPISEGRWKTEDHDGNKILLQQAQCLARKTAWKHQNYASRTAAMTQPLSIAPRSRKLKYGKHKARASHGQVQHFGGSQTDFPMGQVDTFRSLKFPSEAAQAFQRSKSLYCLPTMSTFPSCHSFPMSEPHPCFGLDTYETPAWRISPKINIDDLEGVEETDVDTGMKLSSSDLSVVSAYSPLNGPCSDLEASLPSEGALAQSDTVPGRQNHSSDSLHSVSDISSSPCPVFPSTPAQSQKHILSHYHQLSEITSHLSETLNIEEEEFYI</sequence>
<gene>
    <name type="primary">fam124a</name>
</gene>
<evidence type="ECO:0000256" key="1">
    <source>
        <dbReference type="SAM" id="MobiDB-lite"/>
    </source>
</evidence>
<evidence type="ECO:0000305" key="2"/>
<protein>
    <recommendedName>
        <fullName>Protein FAM124A</fullName>
    </recommendedName>
</protein>